<accession>Q99WG6</accession>
<reference key="1">
    <citation type="journal article" date="2001" name="Lancet">
        <title>Whole genome sequencing of meticillin-resistant Staphylococcus aureus.</title>
        <authorList>
            <person name="Kuroda M."/>
            <person name="Ohta T."/>
            <person name="Uchiyama I."/>
            <person name="Baba T."/>
            <person name="Yuzawa H."/>
            <person name="Kobayashi I."/>
            <person name="Cui L."/>
            <person name="Oguchi A."/>
            <person name="Aoki K."/>
            <person name="Nagai Y."/>
            <person name="Lian J.-Q."/>
            <person name="Ito T."/>
            <person name="Kanamori M."/>
            <person name="Matsumaru H."/>
            <person name="Maruyama A."/>
            <person name="Murakami H."/>
            <person name="Hosoyama A."/>
            <person name="Mizutani-Ui Y."/>
            <person name="Takahashi N.K."/>
            <person name="Sawano T."/>
            <person name="Inoue R."/>
            <person name="Kaito C."/>
            <person name="Sekimizu K."/>
            <person name="Hirakawa H."/>
            <person name="Kuhara S."/>
            <person name="Goto S."/>
            <person name="Yabuzaki J."/>
            <person name="Kanehisa M."/>
            <person name="Yamashita A."/>
            <person name="Oshima K."/>
            <person name="Furuya K."/>
            <person name="Yoshino C."/>
            <person name="Shiba T."/>
            <person name="Hattori M."/>
            <person name="Ogasawara N."/>
            <person name="Hayashi H."/>
            <person name="Hiramatsu K."/>
        </authorList>
    </citation>
    <scope>NUCLEOTIDE SEQUENCE [LARGE SCALE GENOMIC DNA]</scope>
    <source>
        <strain>Mu50 / ATCC 700699</strain>
    </source>
</reference>
<gene>
    <name type="primary">lpl1</name>
    <name type="ordered locus">SAV0436</name>
</gene>
<evidence type="ECO:0000255" key="1">
    <source>
        <dbReference type="PROSITE-ProRule" id="PRU00303"/>
    </source>
</evidence>
<evidence type="ECO:0000305" key="2"/>
<feature type="signal peptide" evidence="1">
    <location>
        <begin position="1"/>
        <end position="22"/>
    </location>
</feature>
<feature type="chain" id="PRO_0000282123" description="Uncharacterized lipoprotein SAV0436">
    <location>
        <begin position="23"/>
        <end position="257"/>
    </location>
</feature>
<feature type="lipid moiety-binding region" description="N-palmitoyl cysteine" evidence="1">
    <location>
        <position position="23"/>
    </location>
</feature>
<feature type="lipid moiety-binding region" description="S-diacylglycerol cysteine" evidence="1">
    <location>
        <position position="23"/>
    </location>
</feature>
<name>Y436_STAAM</name>
<protein>
    <recommendedName>
        <fullName>Uncharacterized lipoprotein SAV0436</fullName>
    </recommendedName>
</protein>
<comment type="subcellular location">
    <subcellularLocation>
        <location evidence="1">Cell membrane</location>
        <topology evidence="1">Lipid-anchor</topology>
    </subcellularLocation>
</comment>
<comment type="similarity">
    <text evidence="2">Belongs to the staphylococcal tandem lipoprotein family.</text>
</comment>
<comment type="sequence caution" evidence="2">
    <conflict type="erroneous initiation">
        <sequence resource="EMBL-CDS" id="BAB56598"/>
    </conflict>
</comment>
<sequence>MRYLKRLSWYISILILIVVIAGCGKGNETKEGSKEEQIKKSFAKTLDMYPIKNLEDLYDKEGYRDSEFKKSDKGTWTIYTDFAKSNKPGELDDEGMVLNLDRNTRTAKGHYFVTTFYRNGKLPDEKNYKIEMKNNKIILLDEVKDDKLKQKIENFKFFGQYANLKELRKYNNGDVSINENVPSYDVEYKMSNKDEIVKELRSRYNISTEKSPILKMHIDGDLKGSSVGYRKLEIDFSKRENSKLSVIEFLSYKPAKK</sequence>
<keyword id="KW-1003">Cell membrane</keyword>
<keyword id="KW-0449">Lipoprotein</keyword>
<keyword id="KW-0472">Membrane</keyword>
<keyword id="KW-0564">Palmitate</keyword>
<keyword id="KW-0732">Signal</keyword>
<proteinExistence type="inferred from homology"/>
<organism>
    <name type="scientific">Staphylococcus aureus (strain Mu50 / ATCC 700699)</name>
    <dbReference type="NCBI Taxonomy" id="158878"/>
    <lineage>
        <taxon>Bacteria</taxon>
        <taxon>Bacillati</taxon>
        <taxon>Bacillota</taxon>
        <taxon>Bacilli</taxon>
        <taxon>Bacillales</taxon>
        <taxon>Staphylococcaceae</taxon>
        <taxon>Staphylococcus</taxon>
    </lineage>
</organism>
<dbReference type="EMBL" id="BA000017">
    <property type="protein sequence ID" value="BAB56598.1"/>
    <property type="status" value="ALT_INIT"/>
    <property type="molecule type" value="Genomic_DNA"/>
</dbReference>
<dbReference type="RefSeq" id="WP_001802013.1">
    <property type="nucleotide sequence ID" value="NC_002758.2"/>
</dbReference>
<dbReference type="SMR" id="Q99WG6"/>
<dbReference type="KEGG" id="sav:SAV0436"/>
<dbReference type="HOGENOM" id="CLU_071589_0_1_9"/>
<dbReference type="PHI-base" id="PHI:11479"/>
<dbReference type="Proteomes" id="UP000002481">
    <property type="component" value="Chromosome"/>
</dbReference>
<dbReference type="GO" id="GO:0005886">
    <property type="term" value="C:plasma membrane"/>
    <property type="evidence" value="ECO:0007669"/>
    <property type="project" value="UniProtKB-SubCell"/>
</dbReference>
<dbReference type="Gene3D" id="2.50.20.40">
    <property type="match status" value="1"/>
</dbReference>
<dbReference type="InterPro" id="IPR007595">
    <property type="entry name" value="Csa"/>
</dbReference>
<dbReference type="InterPro" id="IPR038641">
    <property type="entry name" value="Csa_sf"/>
</dbReference>
<dbReference type="NCBIfam" id="TIGR01742">
    <property type="entry name" value="SA_tandem_lipo"/>
    <property type="match status" value="1"/>
</dbReference>
<dbReference type="Pfam" id="PF04507">
    <property type="entry name" value="DUF576"/>
    <property type="match status" value="1"/>
</dbReference>
<dbReference type="PROSITE" id="PS51257">
    <property type="entry name" value="PROKAR_LIPOPROTEIN"/>
    <property type="match status" value="1"/>
</dbReference>